<protein>
    <recommendedName>
        <fullName evidence="1">Malate dehydrogenase</fullName>
        <ecNumber evidence="1">1.1.1.37</ecNumber>
    </recommendedName>
</protein>
<reference key="1">
    <citation type="journal article" date="2007" name="PLoS ONE">
        <title>Paradoxical DNA repair and peroxide resistance gene conservation in Bacillus pumilus SAFR-032.</title>
        <authorList>
            <person name="Gioia J."/>
            <person name="Yerrapragada S."/>
            <person name="Qin X."/>
            <person name="Jiang H."/>
            <person name="Igboeli O.C."/>
            <person name="Muzny D."/>
            <person name="Dugan-Rocha S."/>
            <person name="Ding Y."/>
            <person name="Hawes A."/>
            <person name="Liu W."/>
            <person name="Perez L."/>
            <person name="Kovar C."/>
            <person name="Dinh H."/>
            <person name="Lee S."/>
            <person name="Nazareth L."/>
            <person name="Blyth P."/>
            <person name="Holder M."/>
            <person name="Buhay C."/>
            <person name="Tirumalai M.R."/>
            <person name="Liu Y."/>
            <person name="Dasgupta I."/>
            <person name="Bokhetache L."/>
            <person name="Fujita M."/>
            <person name="Karouia F."/>
            <person name="Eswara Moorthy P."/>
            <person name="Siefert J."/>
            <person name="Uzman A."/>
            <person name="Buzumbo P."/>
            <person name="Verma A."/>
            <person name="Zwiya H."/>
            <person name="McWilliams B.D."/>
            <person name="Olowu A."/>
            <person name="Clinkenbeard K.D."/>
            <person name="Newcombe D."/>
            <person name="Golebiewski L."/>
            <person name="Petrosino J.F."/>
            <person name="Nicholson W.L."/>
            <person name="Fox G.E."/>
            <person name="Venkateswaran K."/>
            <person name="Highlander S.K."/>
            <person name="Weinstock G.M."/>
        </authorList>
    </citation>
    <scope>NUCLEOTIDE SEQUENCE [LARGE SCALE GENOMIC DNA]</scope>
    <source>
        <strain>SAFR-032</strain>
    </source>
</reference>
<name>MDH_BACP2</name>
<feature type="chain" id="PRO_1000060437" description="Malate dehydrogenase">
    <location>
        <begin position="1"/>
        <end position="312"/>
    </location>
</feature>
<feature type="active site" description="Proton acceptor" evidence="1">
    <location>
        <position position="180"/>
    </location>
</feature>
<feature type="binding site" evidence="1">
    <location>
        <begin position="12"/>
        <end position="17"/>
    </location>
    <ligand>
        <name>NAD(+)</name>
        <dbReference type="ChEBI" id="CHEBI:57540"/>
    </ligand>
</feature>
<feature type="binding site" evidence="1">
    <location>
        <position position="36"/>
    </location>
    <ligand>
        <name>NAD(+)</name>
        <dbReference type="ChEBI" id="CHEBI:57540"/>
    </ligand>
</feature>
<feature type="binding site" evidence="1">
    <location>
        <position position="87"/>
    </location>
    <ligand>
        <name>substrate</name>
    </ligand>
</feature>
<feature type="binding site" evidence="1">
    <location>
        <position position="93"/>
    </location>
    <ligand>
        <name>substrate</name>
    </ligand>
</feature>
<feature type="binding site" evidence="1">
    <location>
        <position position="100"/>
    </location>
    <ligand>
        <name>NAD(+)</name>
        <dbReference type="ChEBI" id="CHEBI:57540"/>
    </ligand>
</feature>
<feature type="binding site" evidence="1">
    <location>
        <begin position="123"/>
        <end position="125"/>
    </location>
    <ligand>
        <name>NAD(+)</name>
        <dbReference type="ChEBI" id="CHEBI:57540"/>
    </ligand>
</feature>
<feature type="binding site" evidence="1">
    <location>
        <position position="125"/>
    </location>
    <ligand>
        <name>substrate</name>
    </ligand>
</feature>
<feature type="binding site" evidence="1">
    <location>
        <position position="156"/>
    </location>
    <ligand>
        <name>substrate</name>
    </ligand>
</feature>
<feature type="modified residue" description="Phosphoserine" evidence="1">
    <location>
        <position position="149"/>
    </location>
</feature>
<organism>
    <name type="scientific">Bacillus pumilus (strain SAFR-032)</name>
    <dbReference type="NCBI Taxonomy" id="315750"/>
    <lineage>
        <taxon>Bacteria</taxon>
        <taxon>Bacillati</taxon>
        <taxon>Bacillota</taxon>
        <taxon>Bacilli</taxon>
        <taxon>Bacillales</taxon>
        <taxon>Bacillaceae</taxon>
        <taxon>Bacillus</taxon>
    </lineage>
</organism>
<sequence length="312" mass="33663">MANKRKKVSVIGAGFTGATTAFLTAQKELADVVLVDIPQLENPTKGKALDMLEASPVQGFDANITGTSNYEDTAGSDVVVITAGIARKPGMSRDDLVSTNEKIMRSVTREIVKYSPEAIIVVLTNPVDAMTYAVYKESGLPKEKVIGQSGILDTARFRTFVAQELNLSVKDVTGFVLGGHGDDMVPLVRYSYAGGIPLETLIPKERIDAIVERTRKGGGEIVNLLGNGSAYYAPAASLVEMVEAILKDQRRVMPTIAYLEGEYGYEGIYLGVPTIVGGNGLEQIIELELTEEERSQLDRSVESVKNVMKVLS</sequence>
<keyword id="KW-0520">NAD</keyword>
<keyword id="KW-0560">Oxidoreductase</keyword>
<keyword id="KW-0597">Phosphoprotein</keyword>
<keyword id="KW-0816">Tricarboxylic acid cycle</keyword>
<proteinExistence type="inferred from homology"/>
<accession>A8FG47</accession>
<evidence type="ECO:0000255" key="1">
    <source>
        <dbReference type="HAMAP-Rule" id="MF_00487"/>
    </source>
</evidence>
<comment type="function">
    <text evidence="1">Catalyzes the reversible oxidation of malate to oxaloacetate.</text>
</comment>
<comment type="catalytic activity">
    <reaction evidence="1">
        <text>(S)-malate + NAD(+) = oxaloacetate + NADH + H(+)</text>
        <dbReference type="Rhea" id="RHEA:21432"/>
        <dbReference type="ChEBI" id="CHEBI:15378"/>
        <dbReference type="ChEBI" id="CHEBI:15589"/>
        <dbReference type="ChEBI" id="CHEBI:16452"/>
        <dbReference type="ChEBI" id="CHEBI:57540"/>
        <dbReference type="ChEBI" id="CHEBI:57945"/>
        <dbReference type="EC" id="1.1.1.37"/>
    </reaction>
</comment>
<comment type="similarity">
    <text evidence="1">Belongs to the LDH/MDH superfamily. MDH type 3 family.</text>
</comment>
<gene>
    <name evidence="1" type="primary">mdh</name>
    <name type="ordered locus">BPUM_2554</name>
</gene>
<dbReference type="EC" id="1.1.1.37" evidence="1"/>
<dbReference type="EMBL" id="CP000813">
    <property type="protein sequence ID" value="ABV63214.1"/>
    <property type="molecule type" value="Genomic_DNA"/>
</dbReference>
<dbReference type="RefSeq" id="WP_007501693.1">
    <property type="nucleotide sequence ID" value="NZ_VEIS01000006.1"/>
</dbReference>
<dbReference type="SMR" id="A8FG47"/>
<dbReference type="STRING" id="315750.BPUM_2554"/>
<dbReference type="GeneID" id="66364122"/>
<dbReference type="KEGG" id="bpu:BPUM_2554"/>
<dbReference type="eggNOG" id="COG0039">
    <property type="taxonomic scope" value="Bacteria"/>
</dbReference>
<dbReference type="HOGENOM" id="CLU_045401_2_1_9"/>
<dbReference type="OrthoDB" id="9802969at2"/>
<dbReference type="Proteomes" id="UP000001355">
    <property type="component" value="Chromosome"/>
</dbReference>
<dbReference type="GO" id="GO:0004459">
    <property type="term" value="F:L-lactate dehydrogenase activity"/>
    <property type="evidence" value="ECO:0007669"/>
    <property type="project" value="TreeGrafter"/>
</dbReference>
<dbReference type="GO" id="GO:0030060">
    <property type="term" value="F:L-malate dehydrogenase (NAD+) activity"/>
    <property type="evidence" value="ECO:0007669"/>
    <property type="project" value="UniProtKB-UniRule"/>
</dbReference>
<dbReference type="GO" id="GO:0006089">
    <property type="term" value="P:lactate metabolic process"/>
    <property type="evidence" value="ECO:0007669"/>
    <property type="project" value="TreeGrafter"/>
</dbReference>
<dbReference type="GO" id="GO:0006099">
    <property type="term" value="P:tricarboxylic acid cycle"/>
    <property type="evidence" value="ECO:0007669"/>
    <property type="project" value="UniProtKB-UniRule"/>
</dbReference>
<dbReference type="CDD" id="cd01339">
    <property type="entry name" value="LDH-like_MDH"/>
    <property type="match status" value="1"/>
</dbReference>
<dbReference type="FunFam" id="3.40.50.720:FF:000018">
    <property type="entry name" value="Malate dehydrogenase"/>
    <property type="match status" value="1"/>
</dbReference>
<dbReference type="FunFam" id="3.90.110.10:FF:000004">
    <property type="entry name" value="Malate dehydrogenase"/>
    <property type="match status" value="1"/>
</dbReference>
<dbReference type="Gene3D" id="3.90.110.10">
    <property type="entry name" value="Lactate dehydrogenase/glycoside hydrolase, family 4, C-terminal"/>
    <property type="match status" value="1"/>
</dbReference>
<dbReference type="Gene3D" id="3.40.50.720">
    <property type="entry name" value="NAD(P)-binding Rossmann-like Domain"/>
    <property type="match status" value="1"/>
</dbReference>
<dbReference type="HAMAP" id="MF_00487">
    <property type="entry name" value="Malate_dehydrog_3"/>
    <property type="match status" value="1"/>
</dbReference>
<dbReference type="InterPro" id="IPR001557">
    <property type="entry name" value="L-lactate/malate_DH"/>
</dbReference>
<dbReference type="InterPro" id="IPR022383">
    <property type="entry name" value="Lactate/malate_DH_C"/>
</dbReference>
<dbReference type="InterPro" id="IPR001236">
    <property type="entry name" value="Lactate/malate_DH_N"/>
</dbReference>
<dbReference type="InterPro" id="IPR015955">
    <property type="entry name" value="Lactate_DH/Glyco_Ohase_4_C"/>
</dbReference>
<dbReference type="InterPro" id="IPR011275">
    <property type="entry name" value="Malate_DH_type3"/>
</dbReference>
<dbReference type="InterPro" id="IPR036291">
    <property type="entry name" value="NAD(P)-bd_dom_sf"/>
</dbReference>
<dbReference type="NCBIfam" id="TIGR01763">
    <property type="entry name" value="MalateDH_bact"/>
    <property type="match status" value="1"/>
</dbReference>
<dbReference type="NCBIfam" id="NF004863">
    <property type="entry name" value="PRK06223.1"/>
    <property type="match status" value="1"/>
</dbReference>
<dbReference type="PANTHER" id="PTHR43128">
    <property type="entry name" value="L-2-HYDROXYCARBOXYLATE DEHYDROGENASE (NAD(P)(+))"/>
    <property type="match status" value="1"/>
</dbReference>
<dbReference type="PANTHER" id="PTHR43128:SF16">
    <property type="entry name" value="L-LACTATE DEHYDROGENASE"/>
    <property type="match status" value="1"/>
</dbReference>
<dbReference type="Pfam" id="PF02866">
    <property type="entry name" value="Ldh_1_C"/>
    <property type="match status" value="1"/>
</dbReference>
<dbReference type="Pfam" id="PF00056">
    <property type="entry name" value="Ldh_1_N"/>
    <property type="match status" value="1"/>
</dbReference>
<dbReference type="PIRSF" id="PIRSF000102">
    <property type="entry name" value="Lac_mal_DH"/>
    <property type="match status" value="1"/>
</dbReference>
<dbReference type="PRINTS" id="PR00086">
    <property type="entry name" value="LLDHDRGNASE"/>
</dbReference>
<dbReference type="SUPFAM" id="SSF56327">
    <property type="entry name" value="LDH C-terminal domain-like"/>
    <property type="match status" value="1"/>
</dbReference>
<dbReference type="SUPFAM" id="SSF51735">
    <property type="entry name" value="NAD(P)-binding Rossmann-fold domains"/>
    <property type="match status" value="1"/>
</dbReference>